<name>RL20_PROMP</name>
<reference key="1">
    <citation type="journal article" date="2003" name="Nature">
        <title>Genome divergence in two Prochlorococcus ecotypes reflects oceanic niche differentiation.</title>
        <authorList>
            <person name="Rocap G."/>
            <person name="Larimer F.W."/>
            <person name="Lamerdin J.E."/>
            <person name="Malfatti S."/>
            <person name="Chain P."/>
            <person name="Ahlgren N.A."/>
            <person name="Arellano A."/>
            <person name="Coleman M."/>
            <person name="Hauser L."/>
            <person name="Hess W.R."/>
            <person name="Johnson Z.I."/>
            <person name="Land M.L."/>
            <person name="Lindell D."/>
            <person name="Post A.F."/>
            <person name="Regala W."/>
            <person name="Shah M."/>
            <person name="Shaw S.L."/>
            <person name="Steglich C."/>
            <person name="Sullivan M.B."/>
            <person name="Ting C.S."/>
            <person name="Tolonen A."/>
            <person name="Webb E.A."/>
            <person name="Zinser E.R."/>
            <person name="Chisholm S.W."/>
        </authorList>
    </citation>
    <scope>NUCLEOTIDE SEQUENCE [LARGE SCALE GENOMIC DNA]</scope>
    <source>
        <strain>CCMP1986 / NIES-2087 / MED4</strain>
    </source>
</reference>
<keyword id="KW-0687">Ribonucleoprotein</keyword>
<keyword id="KW-0689">Ribosomal protein</keyword>
<keyword id="KW-0694">RNA-binding</keyword>
<keyword id="KW-0699">rRNA-binding</keyword>
<comment type="function">
    <text evidence="1">Binds directly to 23S ribosomal RNA and is necessary for the in vitro assembly process of the 50S ribosomal subunit. It is not involved in the protein synthesizing functions of that subunit.</text>
</comment>
<comment type="similarity">
    <text evidence="1">Belongs to the bacterial ribosomal protein bL20 family.</text>
</comment>
<sequence length="115" mass="13478">MARVKRGNIARKRRNKILNLAKGFRGGNKNLFRTANQRVMKALCNAYRDRRRRKRDFRRLWISRINASARINGTNYSRLINGMKNSEIIINRKMLAQLALSDPQCFEKIVSTVNN</sequence>
<accession>Q7UZK1</accession>
<gene>
    <name evidence="1" type="primary">rplT</name>
    <name evidence="1" type="synonym">rpl20</name>
    <name type="ordered locus">PMM1662</name>
</gene>
<feature type="chain" id="PRO_0000177205" description="Large ribosomal subunit protein bL20">
    <location>
        <begin position="1"/>
        <end position="115"/>
    </location>
</feature>
<proteinExistence type="inferred from homology"/>
<organism>
    <name type="scientific">Prochlorococcus marinus subsp. pastoris (strain CCMP1986 / NIES-2087 / MED4)</name>
    <dbReference type="NCBI Taxonomy" id="59919"/>
    <lineage>
        <taxon>Bacteria</taxon>
        <taxon>Bacillati</taxon>
        <taxon>Cyanobacteriota</taxon>
        <taxon>Cyanophyceae</taxon>
        <taxon>Synechococcales</taxon>
        <taxon>Prochlorococcaceae</taxon>
        <taxon>Prochlorococcus</taxon>
    </lineage>
</organism>
<protein>
    <recommendedName>
        <fullName evidence="1">Large ribosomal subunit protein bL20</fullName>
    </recommendedName>
    <alternativeName>
        <fullName evidence="2">50S ribosomal protein L20</fullName>
    </alternativeName>
</protein>
<dbReference type="EMBL" id="BX548174">
    <property type="protein sequence ID" value="CAE20121.1"/>
    <property type="molecule type" value="Genomic_DNA"/>
</dbReference>
<dbReference type="RefSeq" id="WP_011133289.1">
    <property type="nucleotide sequence ID" value="NC_005072.1"/>
</dbReference>
<dbReference type="SMR" id="Q7UZK1"/>
<dbReference type="STRING" id="59919.PMM1662"/>
<dbReference type="KEGG" id="pmm:PMM1662"/>
<dbReference type="eggNOG" id="COG0292">
    <property type="taxonomic scope" value="Bacteria"/>
</dbReference>
<dbReference type="HOGENOM" id="CLU_123265_1_0_3"/>
<dbReference type="OrthoDB" id="9808966at2"/>
<dbReference type="Proteomes" id="UP000001026">
    <property type="component" value="Chromosome"/>
</dbReference>
<dbReference type="GO" id="GO:1990904">
    <property type="term" value="C:ribonucleoprotein complex"/>
    <property type="evidence" value="ECO:0007669"/>
    <property type="project" value="UniProtKB-KW"/>
</dbReference>
<dbReference type="GO" id="GO:0005840">
    <property type="term" value="C:ribosome"/>
    <property type="evidence" value="ECO:0007669"/>
    <property type="project" value="UniProtKB-KW"/>
</dbReference>
<dbReference type="GO" id="GO:0019843">
    <property type="term" value="F:rRNA binding"/>
    <property type="evidence" value="ECO:0007669"/>
    <property type="project" value="UniProtKB-UniRule"/>
</dbReference>
<dbReference type="GO" id="GO:0003735">
    <property type="term" value="F:structural constituent of ribosome"/>
    <property type="evidence" value="ECO:0007669"/>
    <property type="project" value="InterPro"/>
</dbReference>
<dbReference type="GO" id="GO:0000027">
    <property type="term" value="P:ribosomal large subunit assembly"/>
    <property type="evidence" value="ECO:0007669"/>
    <property type="project" value="UniProtKB-UniRule"/>
</dbReference>
<dbReference type="GO" id="GO:0006412">
    <property type="term" value="P:translation"/>
    <property type="evidence" value="ECO:0007669"/>
    <property type="project" value="InterPro"/>
</dbReference>
<dbReference type="CDD" id="cd07026">
    <property type="entry name" value="Ribosomal_L20"/>
    <property type="match status" value="1"/>
</dbReference>
<dbReference type="FunFam" id="1.10.1900.20:FF:000001">
    <property type="entry name" value="50S ribosomal protein L20"/>
    <property type="match status" value="1"/>
</dbReference>
<dbReference type="Gene3D" id="6.10.160.10">
    <property type="match status" value="1"/>
</dbReference>
<dbReference type="Gene3D" id="1.10.1900.20">
    <property type="entry name" value="Ribosomal protein L20"/>
    <property type="match status" value="1"/>
</dbReference>
<dbReference type="HAMAP" id="MF_00382">
    <property type="entry name" value="Ribosomal_bL20"/>
    <property type="match status" value="1"/>
</dbReference>
<dbReference type="InterPro" id="IPR005813">
    <property type="entry name" value="Ribosomal_bL20"/>
</dbReference>
<dbReference type="InterPro" id="IPR049946">
    <property type="entry name" value="RIBOSOMAL_L20_CS"/>
</dbReference>
<dbReference type="InterPro" id="IPR035566">
    <property type="entry name" value="Ribosomal_protein_bL20_C"/>
</dbReference>
<dbReference type="NCBIfam" id="TIGR01032">
    <property type="entry name" value="rplT_bact"/>
    <property type="match status" value="1"/>
</dbReference>
<dbReference type="PANTHER" id="PTHR10986">
    <property type="entry name" value="39S RIBOSOMAL PROTEIN L20"/>
    <property type="match status" value="1"/>
</dbReference>
<dbReference type="Pfam" id="PF00453">
    <property type="entry name" value="Ribosomal_L20"/>
    <property type="match status" value="1"/>
</dbReference>
<dbReference type="PRINTS" id="PR00062">
    <property type="entry name" value="RIBOSOMALL20"/>
</dbReference>
<dbReference type="SUPFAM" id="SSF74731">
    <property type="entry name" value="Ribosomal protein L20"/>
    <property type="match status" value="1"/>
</dbReference>
<dbReference type="PROSITE" id="PS00937">
    <property type="entry name" value="RIBOSOMAL_L20"/>
    <property type="match status" value="1"/>
</dbReference>
<evidence type="ECO:0000255" key="1">
    <source>
        <dbReference type="HAMAP-Rule" id="MF_00382"/>
    </source>
</evidence>
<evidence type="ECO:0000305" key="2"/>